<feature type="chain" id="PRO_0000146442" description="Small ribosomal subunit protein uS12m">
    <location>
        <begin position="1"/>
        <end position="125"/>
    </location>
</feature>
<feature type="region of interest" description="Disordered" evidence="1">
    <location>
        <begin position="1"/>
        <end position="51"/>
    </location>
</feature>
<feature type="compositionally biased region" description="Basic and acidic residues" evidence="1">
    <location>
        <begin position="10"/>
        <end position="23"/>
    </location>
</feature>
<name>RT12_NICSY</name>
<sequence>MPTKNQLIRHGREEKRRTDRTRALDQCPQKQGVCPRVSTRTPKKPNSAPRKIAKVRLSNRHDIFAHIPGEGHNSQEHSMVLIRGGRVKDSPGVKFHCIRGVKDLLGIPDRRRGRSKYGAEKPKSI</sequence>
<reference key="1">
    <citation type="journal article" date="1997" name="Curr. Genet.">
        <title>A mitochondrial sub-stoichiometric orf87-nad3-nad1 exonA co-transcription unit present in solanaceae was amplified in the genus Nicotiana.</title>
        <authorList>
            <person name="Gutierres S."/>
            <person name="Lelandais C."/>
            <person name="de Paepe R."/>
            <person name="Vedel F."/>
            <person name="Chorit P."/>
        </authorList>
    </citation>
    <scope>NUCLEOTIDE SEQUENCE [GENOMIC DNA]</scope>
</reference>
<organism>
    <name type="scientific">Nicotiana sylvestris</name>
    <name type="common">Wood tobacco</name>
    <name type="synonym">South American tobacco</name>
    <dbReference type="NCBI Taxonomy" id="4096"/>
    <lineage>
        <taxon>Eukaryota</taxon>
        <taxon>Viridiplantae</taxon>
        <taxon>Streptophyta</taxon>
        <taxon>Embryophyta</taxon>
        <taxon>Tracheophyta</taxon>
        <taxon>Spermatophyta</taxon>
        <taxon>Magnoliopsida</taxon>
        <taxon>eudicotyledons</taxon>
        <taxon>Gunneridae</taxon>
        <taxon>Pentapetalae</taxon>
        <taxon>asterids</taxon>
        <taxon>lamiids</taxon>
        <taxon>Solanales</taxon>
        <taxon>Solanaceae</taxon>
        <taxon>Nicotianoideae</taxon>
        <taxon>Nicotianeae</taxon>
        <taxon>Nicotiana</taxon>
    </lineage>
</organism>
<comment type="function">
    <text>Protein S12 is involved in the translation initiation step.</text>
</comment>
<comment type="subcellular location">
    <subcellularLocation>
        <location>Mitochondrion</location>
    </subcellularLocation>
</comment>
<comment type="similarity">
    <text evidence="2">Belongs to the universal ribosomal protein uS12 family.</text>
</comment>
<accession>Q95869</accession>
<protein>
    <recommendedName>
        <fullName evidence="2">Small ribosomal subunit protein uS12m</fullName>
    </recommendedName>
    <alternativeName>
        <fullName>Ribosomal protein S12, mitochondrial</fullName>
    </alternativeName>
</protein>
<dbReference type="EMBL" id="X96741">
    <property type="protein sequence ID" value="CAA65515.1"/>
    <property type="molecule type" value="Genomic_DNA"/>
</dbReference>
<dbReference type="SMR" id="Q95869"/>
<dbReference type="Proteomes" id="UP000189701">
    <property type="component" value="Unplaced"/>
</dbReference>
<dbReference type="GO" id="GO:0005739">
    <property type="term" value="C:mitochondrion"/>
    <property type="evidence" value="ECO:0007669"/>
    <property type="project" value="UniProtKB-SubCell"/>
</dbReference>
<dbReference type="GO" id="GO:0015935">
    <property type="term" value="C:small ribosomal subunit"/>
    <property type="evidence" value="ECO:0007669"/>
    <property type="project" value="InterPro"/>
</dbReference>
<dbReference type="GO" id="GO:0003735">
    <property type="term" value="F:structural constituent of ribosome"/>
    <property type="evidence" value="ECO:0007669"/>
    <property type="project" value="InterPro"/>
</dbReference>
<dbReference type="GO" id="GO:0006412">
    <property type="term" value="P:translation"/>
    <property type="evidence" value="ECO:0007669"/>
    <property type="project" value="InterPro"/>
</dbReference>
<dbReference type="CDD" id="cd03368">
    <property type="entry name" value="Ribosomal_S12"/>
    <property type="match status" value="1"/>
</dbReference>
<dbReference type="FunFam" id="2.40.50.140:FF:000099">
    <property type="entry name" value="Ribosomal protein S12, mitochondrial"/>
    <property type="match status" value="1"/>
</dbReference>
<dbReference type="Gene3D" id="2.40.50.140">
    <property type="entry name" value="Nucleic acid-binding proteins"/>
    <property type="match status" value="1"/>
</dbReference>
<dbReference type="InterPro" id="IPR012340">
    <property type="entry name" value="NA-bd_OB-fold"/>
</dbReference>
<dbReference type="InterPro" id="IPR006032">
    <property type="entry name" value="Ribosomal_uS12"/>
</dbReference>
<dbReference type="InterPro" id="IPR005679">
    <property type="entry name" value="Ribosomal_uS12_bac"/>
</dbReference>
<dbReference type="NCBIfam" id="TIGR00981">
    <property type="entry name" value="rpsL_bact"/>
    <property type="match status" value="1"/>
</dbReference>
<dbReference type="PANTHER" id="PTHR11652">
    <property type="entry name" value="30S RIBOSOMAL PROTEIN S12 FAMILY MEMBER"/>
    <property type="match status" value="1"/>
</dbReference>
<dbReference type="Pfam" id="PF00164">
    <property type="entry name" value="Ribosom_S12_S23"/>
    <property type="match status" value="1"/>
</dbReference>
<dbReference type="PIRSF" id="PIRSF002133">
    <property type="entry name" value="Ribosomal_S12/S23"/>
    <property type="match status" value="1"/>
</dbReference>
<dbReference type="PRINTS" id="PR01034">
    <property type="entry name" value="RIBOSOMALS12"/>
</dbReference>
<dbReference type="SUPFAM" id="SSF50249">
    <property type="entry name" value="Nucleic acid-binding proteins"/>
    <property type="match status" value="1"/>
</dbReference>
<dbReference type="PROSITE" id="PS00055">
    <property type="entry name" value="RIBOSOMAL_S12"/>
    <property type="match status" value="1"/>
</dbReference>
<geneLocation type="mitochondrion"/>
<keyword id="KW-0496">Mitochondrion</keyword>
<keyword id="KW-1185">Reference proteome</keyword>
<keyword id="KW-0687">Ribonucleoprotein</keyword>
<keyword id="KW-0689">Ribosomal protein</keyword>
<gene>
    <name type="primary">RPS12</name>
</gene>
<proteinExistence type="inferred from homology"/>
<evidence type="ECO:0000256" key="1">
    <source>
        <dbReference type="SAM" id="MobiDB-lite"/>
    </source>
</evidence>
<evidence type="ECO:0000305" key="2"/>